<dbReference type="EMBL" id="CP000096">
    <property type="protein sequence ID" value="ABB23073.1"/>
    <property type="molecule type" value="Genomic_DNA"/>
</dbReference>
<dbReference type="RefSeq" id="WP_011356949.1">
    <property type="nucleotide sequence ID" value="NC_007512.1"/>
</dbReference>
<dbReference type="SMR" id="Q3B6F8"/>
<dbReference type="STRING" id="319225.Plut_0185"/>
<dbReference type="KEGG" id="plt:Plut_0185"/>
<dbReference type="eggNOG" id="COG0185">
    <property type="taxonomic scope" value="Bacteria"/>
</dbReference>
<dbReference type="HOGENOM" id="CLU_144911_0_1_10"/>
<dbReference type="OrthoDB" id="9797833at2"/>
<dbReference type="Proteomes" id="UP000002709">
    <property type="component" value="Chromosome"/>
</dbReference>
<dbReference type="GO" id="GO:0005737">
    <property type="term" value="C:cytoplasm"/>
    <property type="evidence" value="ECO:0007669"/>
    <property type="project" value="UniProtKB-ARBA"/>
</dbReference>
<dbReference type="GO" id="GO:0015935">
    <property type="term" value="C:small ribosomal subunit"/>
    <property type="evidence" value="ECO:0007669"/>
    <property type="project" value="InterPro"/>
</dbReference>
<dbReference type="GO" id="GO:0019843">
    <property type="term" value="F:rRNA binding"/>
    <property type="evidence" value="ECO:0007669"/>
    <property type="project" value="UniProtKB-UniRule"/>
</dbReference>
<dbReference type="GO" id="GO:0003735">
    <property type="term" value="F:structural constituent of ribosome"/>
    <property type="evidence" value="ECO:0007669"/>
    <property type="project" value="InterPro"/>
</dbReference>
<dbReference type="GO" id="GO:0000028">
    <property type="term" value="P:ribosomal small subunit assembly"/>
    <property type="evidence" value="ECO:0007669"/>
    <property type="project" value="TreeGrafter"/>
</dbReference>
<dbReference type="GO" id="GO:0006412">
    <property type="term" value="P:translation"/>
    <property type="evidence" value="ECO:0007669"/>
    <property type="project" value="UniProtKB-UniRule"/>
</dbReference>
<dbReference type="FunFam" id="3.30.860.10:FF:000001">
    <property type="entry name" value="30S ribosomal protein S19"/>
    <property type="match status" value="1"/>
</dbReference>
<dbReference type="Gene3D" id="3.30.860.10">
    <property type="entry name" value="30s Ribosomal Protein S19, Chain A"/>
    <property type="match status" value="1"/>
</dbReference>
<dbReference type="HAMAP" id="MF_00531">
    <property type="entry name" value="Ribosomal_uS19"/>
    <property type="match status" value="1"/>
</dbReference>
<dbReference type="InterPro" id="IPR002222">
    <property type="entry name" value="Ribosomal_uS19"/>
</dbReference>
<dbReference type="InterPro" id="IPR005732">
    <property type="entry name" value="Ribosomal_uS19_bac-type"/>
</dbReference>
<dbReference type="InterPro" id="IPR020934">
    <property type="entry name" value="Ribosomal_uS19_CS"/>
</dbReference>
<dbReference type="InterPro" id="IPR023575">
    <property type="entry name" value="Ribosomal_uS19_SF"/>
</dbReference>
<dbReference type="NCBIfam" id="TIGR01050">
    <property type="entry name" value="rpsS_bact"/>
    <property type="match status" value="1"/>
</dbReference>
<dbReference type="PANTHER" id="PTHR11880">
    <property type="entry name" value="RIBOSOMAL PROTEIN S19P FAMILY MEMBER"/>
    <property type="match status" value="1"/>
</dbReference>
<dbReference type="PANTHER" id="PTHR11880:SF8">
    <property type="entry name" value="SMALL RIBOSOMAL SUBUNIT PROTEIN US19M"/>
    <property type="match status" value="1"/>
</dbReference>
<dbReference type="Pfam" id="PF00203">
    <property type="entry name" value="Ribosomal_S19"/>
    <property type="match status" value="1"/>
</dbReference>
<dbReference type="PIRSF" id="PIRSF002144">
    <property type="entry name" value="Ribosomal_S19"/>
    <property type="match status" value="1"/>
</dbReference>
<dbReference type="PRINTS" id="PR00975">
    <property type="entry name" value="RIBOSOMALS19"/>
</dbReference>
<dbReference type="SUPFAM" id="SSF54570">
    <property type="entry name" value="Ribosomal protein S19"/>
    <property type="match status" value="1"/>
</dbReference>
<dbReference type="PROSITE" id="PS00323">
    <property type="entry name" value="RIBOSOMAL_S19"/>
    <property type="match status" value="1"/>
</dbReference>
<gene>
    <name evidence="1" type="primary">rpsS</name>
    <name type="ordered locus">Plut_0185</name>
</gene>
<organism>
    <name type="scientific">Chlorobium luteolum (strain DSM 273 / BCRC 81028 / 2530)</name>
    <name type="common">Pelodictyon luteolum</name>
    <dbReference type="NCBI Taxonomy" id="319225"/>
    <lineage>
        <taxon>Bacteria</taxon>
        <taxon>Pseudomonadati</taxon>
        <taxon>Chlorobiota</taxon>
        <taxon>Chlorobiia</taxon>
        <taxon>Chlorobiales</taxon>
        <taxon>Chlorobiaceae</taxon>
        <taxon>Chlorobium/Pelodictyon group</taxon>
        <taxon>Pelodictyon</taxon>
    </lineage>
</organism>
<accession>Q3B6F8</accession>
<keyword id="KW-1185">Reference proteome</keyword>
<keyword id="KW-0687">Ribonucleoprotein</keyword>
<keyword id="KW-0689">Ribosomal protein</keyword>
<keyword id="KW-0694">RNA-binding</keyword>
<keyword id="KW-0699">rRNA-binding</keyword>
<comment type="function">
    <text evidence="1">Protein S19 forms a complex with S13 that binds strongly to the 16S ribosomal RNA.</text>
</comment>
<comment type="similarity">
    <text evidence="1">Belongs to the universal ribosomal protein uS19 family.</text>
</comment>
<sequence length="98" mass="10883">MPRSLKKGPFIDIKLEKRILDMNSRSEKKVLKTWSRSTMISPDFVGHTIAVHNGKTHVPVYVSDNMVGHKLGEFAPTRTFRGHAGGKAEKGGSAPKRK</sequence>
<feature type="chain" id="PRO_0000265396" description="Small ribosomal subunit protein uS19">
    <location>
        <begin position="1"/>
        <end position="98"/>
    </location>
</feature>
<feature type="region of interest" description="Disordered" evidence="2">
    <location>
        <begin position="77"/>
        <end position="98"/>
    </location>
</feature>
<evidence type="ECO:0000255" key="1">
    <source>
        <dbReference type="HAMAP-Rule" id="MF_00531"/>
    </source>
</evidence>
<evidence type="ECO:0000256" key="2">
    <source>
        <dbReference type="SAM" id="MobiDB-lite"/>
    </source>
</evidence>
<evidence type="ECO:0000305" key="3"/>
<reference key="1">
    <citation type="submission" date="2005-08" db="EMBL/GenBank/DDBJ databases">
        <title>Complete sequence of Pelodictyon luteolum DSM 273.</title>
        <authorList>
            <consortium name="US DOE Joint Genome Institute"/>
            <person name="Copeland A."/>
            <person name="Lucas S."/>
            <person name="Lapidus A."/>
            <person name="Barry K."/>
            <person name="Detter J.C."/>
            <person name="Glavina T."/>
            <person name="Hammon N."/>
            <person name="Israni S."/>
            <person name="Pitluck S."/>
            <person name="Bryant D."/>
            <person name="Schmutz J."/>
            <person name="Larimer F."/>
            <person name="Land M."/>
            <person name="Kyrpides N."/>
            <person name="Ivanova N."/>
            <person name="Richardson P."/>
        </authorList>
    </citation>
    <scope>NUCLEOTIDE SEQUENCE [LARGE SCALE GENOMIC DNA]</scope>
    <source>
        <strain>DSM 273 / BCRC 81028 / 2530</strain>
    </source>
</reference>
<protein>
    <recommendedName>
        <fullName evidence="1">Small ribosomal subunit protein uS19</fullName>
    </recommendedName>
    <alternativeName>
        <fullName evidence="3">30S ribosomal protein S19</fullName>
    </alternativeName>
</protein>
<name>RS19_CHLL3</name>
<proteinExistence type="inferred from homology"/>